<reference key="1">
    <citation type="submission" date="2007-08" db="EMBL/GenBank/DDBJ databases">
        <authorList>
            <consortium name="The Citrobacter koseri Genome Sequencing Project"/>
            <person name="McClelland M."/>
            <person name="Sanderson E.K."/>
            <person name="Porwollik S."/>
            <person name="Spieth J."/>
            <person name="Clifton W.S."/>
            <person name="Latreille P."/>
            <person name="Courtney L."/>
            <person name="Wang C."/>
            <person name="Pepin K."/>
            <person name="Bhonagiri V."/>
            <person name="Nash W."/>
            <person name="Johnson M."/>
            <person name="Thiruvilangam P."/>
            <person name="Wilson R."/>
        </authorList>
    </citation>
    <scope>NUCLEOTIDE SEQUENCE [LARGE SCALE GENOMIC DNA]</scope>
    <source>
        <strain>ATCC BAA-895 / CDC 4225-83 / SGSC4696</strain>
    </source>
</reference>
<comment type="function">
    <text evidence="1">Catalyzes the methyl esterification of L-isoaspartyl residues in peptides and proteins that result from spontaneous decomposition of normal L-aspartyl and L-asparaginyl residues. It plays a role in the repair and/or degradation of damaged proteins.</text>
</comment>
<comment type="catalytic activity">
    <reaction evidence="1">
        <text>[protein]-L-isoaspartate + S-adenosyl-L-methionine = [protein]-L-isoaspartate alpha-methyl ester + S-adenosyl-L-homocysteine</text>
        <dbReference type="Rhea" id="RHEA:12705"/>
        <dbReference type="Rhea" id="RHEA-COMP:12143"/>
        <dbReference type="Rhea" id="RHEA-COMP:12144"/>
        <dbReference type="ChEBI" id="CHEBI:57856"/>
        <dbReference type="ChEBI" id="CHEBI:59789"/>
        <dbReference type="ChEBI" id="CHEBI:90596"/>
        <dbReference type="ChEBI" id="CHEBI:90598"/>
        <dbReference type="EC" id="2.1.1.77"/>
    </reaction>
</comment>
<comment type="subcellular location">
    <subcellularLocation>
        <location evidence="1">Cytoplasm</location>
    </subcellularLocation>
</comment>
<comment type="similarity">
    <text evidence="1">Belongs to the methyltransferase superfamily. L-isoaspartyl/D-aspartyl protein methyltransferase family.</text>
</comment>
<gene>
    <name evidence="1" type="primary">pcm</name>
    <name type="ordered locus">CKO_04104</name>
</gene>
<sequence length="208" mass="23333">MVSRRVHTLLEQLRAQGIKDEQVLDALAAVPREKFIDEAFEHKAWDNIALPIGQGQTISQPYMVARMTELLELTPQSRVLEIGTGSGYQTAILAHLVQHVCSVERIKGLQWQARRRLKQLDLHNVSTRHGDGWQGWQARAPFDAIIVTAAPPEIPTALMTQLDEGGILVLPVGEEHQFLKRVRRRGGEFIIDTVEAVRFVPLVKGELA</sequence>
<name>PIMT_CITK8</name>
<accession>A8ANV7</accession>
<dbReference type="EC" id="2.1.1.77" evidence="1"/>
<dbReference type="EMBL" id="CP000822">
    <property type="protein sequence ID" value="ABV15170.1"/>
    <property type="molecule type" value="Genomic_DNA"/>
</dbReference>
<dbReference type="RefSeq" id="WP_012134859.1">
    <property type="nucleotide sequence ID" value="NC_009792.1"/>
</dbReference>
<dbReference type="SMR" id="A8ANV7"/>
<dbReference type="STRING" id="290338.CKO_04104"/>
<dbReference type="GeneID" id="45137741"/>
<dbReference type="KEGG" id="cko:CKO_04104"/>
<dbReference type="HOGENOM" id="CLU_055432_2_0_6"/>
<dbReference type="OrthoDB" id="9810066at2"/>
<dbReference type="Proteomes" id="UP000008148">
    <property type="component" value="Chromosome"/>
</dbReference>
<dbReference type="GO" id="GO:0005737">
    <property type="term" value="C:cytoplasm"/>
    <property type="evidence" value="ECO:0007669"/>
    <property type="project" value="UniProtKB-SubCell"/>
</dbReference>
<dbReference type="GO" id="GO:0004719">
    <property type="term" value="F:protein-L-isoaspartate (D-aspartate) O-methyltransferase activity"/>
    <property type="evidence" value="ECO:0007669"/>
    <property type="project" value="UniProtKB-UniRule"/>
</dbReference>
<dbReference type="GO" id="GO:0032259">
    <property type="term" value="P:methylation"/>
    <property type="evidence" value="ECO:0007669"/>
    <property type="project" value="UniProtKB-KW"/>
</dbReference>
<dbReference type="GO" id="GO:0036211">
    <property type="term" value="P:protein modification process"/>
    <property type="evidence" value="ECO:0007669"/>
    <property type="project" value="UniProtKB-UniRule"/>
</dbReference>
<dbReference type="GO" id="GO:0030091">
    <property type="term" value="P:protein repair"/>
    <property type="evidence" value="ECO:0007669"/>
    <property type="project" value="UniProtKB-UniRule"/>
</dbReference>
<dbReference type="CDD" id="cd02440">
    <property type="entry name" value="AdoMet_MTases"/>
    <property type="match status" value="1"/>
</dbReference>
<dbReference type="FunFam" id="3.40.50.150:FF:000010">
    <property type="entry name" value="Protein-L-isoaspartate O-methyltransferase"/>
    <property type="match status" value="1"/>
</dbReference>
<dbReference type="Gene3D" id="3.40.50.150">
    <property type="entry name" value="Vaccinia Virus protein VP39"/>
    <property type="match status" value="1"/>
</dbReference>
<dbReference type="HAMAP" id="MF_00090">
    <property type="entry name" value="PIMT"/>
    <property type="match status" value="1"/>
</dbReference>
<dbReference type="InterPro" id="IPR000682">
    <property type="entry name" value="PCMT"/>
</dbReference>
<dbReference type="InterPro" id="IPR029063">
    <property type="entry name" value="SAM-dependent_MTases_sf"/>
</dbReference>
<dbReference type="NCBIfam" id="TIGR00080">
    <property type="entry name" value="pimt"/>
    <property type="match status" value="1"/>
</dbReference>
<dbReference type="NCBIfam" id="NF001453">
    <property type="entry name" value="PRK00312.1"/>
    <property type="match status" value="1"/>
</dbReference>
<dbReference type="PANTHER" id="PTHR11579">
    <property type="entry name" value="PROTEIN-L-ISOASPARTATE O-METHYLTRANSFERASE"/>
    <property type="match status" value="1"/>
</dbReference>
<dbReference type="PANTHER" id="PTHR11579:SF0">
    <property type="entry name" value="PROTEIN-L-ISOASPARTATE(D-ASPARTATE) O-METHYLTRANSFERASE"/>
    <property type="match status" value="1"/>
</dbReference>
<dbReference type="Pfam" id="PF01135">
    <property type="entry name" value="PCMT"/>
    <property type="match status" value="1"/>
</dbReference>
<dbReference type="SUPFAM" id="SSF53335">
    <property type="entry name" value="S-adenosyl-L-methionine-dependent methyltransferases"/>
    <property type="match status" value="1"/>
</dbReference>
<dbReference type="PROSITE" id="PS01279">
    <property type="entry name" value="PCMT"/>
    <property type="match status" value="1"/>
</dbReference>
<protein>
    <recommendedName>
        <fullName evidence="1">Protein-L-isoaspartate O-methyltransferase</fullName>
        <ecNumber evidence="1">2.1.1.77</ecNumber>
    </recommendedName>
    <alternativeName>
        <fullName evidence="1">L-isoaspartyl protein carboxyl methyltransferase</fullName>
    </alternativeName>
    <alternativeName>
        <fullName evidence="1">Protein L-isoaspartyl methyltransferase</fullName>
    </alternativeName>
    <alternativeName>
        <fullName evidence="1">Protein-beta-aspartate methyltransferase</fullName>
        <shortName evidence="1">PIMT</shortName>
    </alternativeName>
</protein>
<keyword id="KW-0963">Cytoplasm</keyword>
<keyword id="KW-0489">Methyltransferase</keyword>
<keyword id="KW-1185">Reference proteome</keyword>
<keyword id="KW-0949">S-adenosyl-L-methionine</keyword>
<keyword id="KW-0808">Transferase</keyword>
<evidence type="ECO:0000255" key="1">
    <source>
        <dbReference type="HAMAP-Rule" id="MF_00090"/>
    </source>
</evidence>
<feature type="chain" id="PRO_1000004815" description="Protein-L-isoaspartate O-methyltransferase">
    <location>
        <begin position="1"/>
        <end position="208"/>
    </location>
</feature>
<feature type="active site" evidence="1">
    <location>
        <position position="59"/>
    </location>
</feature>
<organism>
    <name type="scientific">Citrobacter koseri (strain ATCC BAA-895 / CDC 4225-83 / SGSC4696)</name>
    <dbReference type="NCBI Taxonomy" id="290338"/>
    <lineage>
        <taxon>Bacteria</taxon>
        <taxon>Pseudomonadati</taxon>
        <taxon>Pseudomonadota</taxon>
        <taxon>Gammaproteobacteria</taxon>
        <taxon>Enterobacterales</taxon>
        <taxon>Enterobacteriaceae</taxon>
        <taxon>Citrobacter</taxon>
    </lineage>
</organism>
<proteinExistence type="inferred from homology"/>